<gene>
    <name evidence="1" type="primary">yacG</name>
    <name type="ordered locus">YPDSF_2923</name>
</gene>
<keyword id="KW-0479">Metal-binding</keyword>
<keyword id="KW-0862">Zinc</keyword>
<reference key="1">
    <citation type="submission" date="2007-02" db="EMBL/GenBank/DDBJ databases">
        <title>Complete sequence of chromosome of Yersinia pestis Pestoides F.</title>
        <authorList>
            <consortium name="US DOE Joint Genome Institute"/>
            <person name="Copeland A."/>
            <person name="Lucas S."/>
            <person name="Lapidus A."/>
            <person name="Barry K."/>
            <person name="Detter J.C."/>
            <person name="Glavina del Rio T."/>
            <person name="Hammon N."/>
            <person name="Israni S."/>
            <person name="Dalin E."/>
            <person name="Tice H."/>
            <person name="Pitluck S."/>
            <person name="Di Bartolo G."/>
            <person name="Chain P."/>
            <person name="Malfatti S."/>
            <person name="Shin M."/>
            <person name="Vergez L."/>
            <person name="Schmutz J."/>
            <person name="Larimer F."/>
            <person name="Land M."/>
            <person name="Hauser L."/>
            <person name="Worsham P."/>
            <person name="Chu M."/>
            <person name="Bearden S."/>
            <person name="Garcia E."/>
            <person name="Richardson P."/>
        </authorList>
    </citation>
    <scope>NUCLEOTIDE SEQUENCE [LARGE SCALE GENOMIC DNA]</scope>
    <source>
        <strain>Pestoides F</strain>
    </source>
</reference>
<feature type="chain" id="PRO_1000057007" description="DNA gyrase inhibitor YacG">
    <location>
        <begin position="1"/>
        <end position="68"/>
    </location>
</feature>
<feature type="region of interest" description="Disordered" evidence="2">
    <location>
        <begin position="45"/>
        <end position="68"/>
    </location>
</feature>
<feature type="compositionally biased region" description="Acidic residues" evidence="2">
    <location>
        <begin position="53"/>
        <end position="68"/>
    </location>
</feature>
<feature type="binding site" evidence="1">
    <location>
        <position position="10"/>
    </location>
    <ligand>
        <name>Zn(2+)</name>
        <dbReference type="ChEBI" id="CHEBI:29105"/>
    </ligand>
</feature>
<feature type="binding site" evidence="1">
    <location>
        <position position="13"/>
    </location>
    <ligand>
        <name>Zn(2+)</name>
        <dbReference type="ChEBI" id="CHEBI:29105"/>
    </ligand>
</feature>
<feature type="binding site" evidence="1">
    <location>
        <position position="29"/>
    </location>
    <ligand>
        <name>Zn(2+)</name>
        <dbReference type="ChEBI" id="CHEBI:29105"/>
    </ligand>
</feature>
<feature type="binding site" evidence="1">
    <location>
        <position position="33"/>
    </location>
    <ligand>
        <name>Zn(2+)</name>
        <dbReference type="ChEBI" id="CHEBI:29105"/>
    </ligand>
</feature>
<accession>A4TPS3</accession>
<comment type="function">
    <text evidence="1">Inhibits all the catalytic activities of DNA gyrase by preventing its interaction with DNA. Acts by binding directly to the C-terminal domain of GyrB, which probably disrupts DNA binding by the gyrase.</text>
</comment>
<comment type="cofactor">
    <cofactor evidence="1">
        <name>Zn(2+)</name>
        <dbReference type="ChEBI" id="CHEBI:29105"/>
    </cofactor>
    <text evidence="1">Binds 1 zinc ion.</text>
</comment>
<comment type="subunit">
    <text evidence="1">Interacts with GyrB.</text>
</comment>
<comment type="similarity">
    <text evidence="1">Belongs to the DNA gyrase inhibitor YacG family.</text>
</comment>
<organism>
    <name type="scientific">Yersinia pestis (strain Pestoides F)</name>
    <dbReference type="NCBI Taxonomy" id="386656"/>
    <lineage>
        <taxon>Bacteria</taxon>
        <taxon>Pseudomonadati</taxon>
        <taxon>Pseudomonadota</taxon>
        <taxon>Gammaproteobacteria</taxon>
        <taxon>Enterobacterales</taxon>
        <taxon>Yersiniaceae</taxon>
        <taxon>Yersinia</taxon>
    </lineage>
</organism>
<name>YACG_YERPP</name>
<proteinExistence type="inferred from homology"/>
<sequence length="68" mass="7900">MESEQIQVNCPTCGKVVIWGEQSPFRPFCCKRCQLIDLGEWADEEKRIPSDTELSDSDEWSEEDPLKH</sequence>
<evidence type="ECO:0000255" key="1">
    <source>
        <dbReference type="HAMAP-Rule" id="MF_00649"/>
    </source>
</evidence>
<evidence type="ECO:0000256" key="2">
    <source>
        <dbReference type="SAM" id="MobiDB-lite"/>
    </source>
</evidence>
<dbReference type="EMBL" id="CP000668">
    <property type="protein sequence ID" value="ABP41285.1"/>
    <property type="molecule type" value="Genomic_DNA"/>
</dbReference>
<dbReference type="RefSeq" id="WP_002209317.1">
    <property type="nucleotide sequence ID" value="NZ_CP009715.1"/>
</dbReference>
<dbReference type="SMR" id="A4TPS3"/>
<dbReference type="GeneID" id="57975278"/>
<dbReference type="KEGG" id="ypp:YPDSF_2923"/>
<dbReference type="PATRIC" id="fig|386656.14.peg.1444"/>
<dbReference type="GO" id="GO:0008657">
    <property type="term" value="F:DNA topoisomerase type II (double strand cut, ATP-hydrolyzing) inhibitor activity"/>
    <property type="evidence" value="ECO:0007669"/>
    <property type="project" value="UniProtKB-UniRule"/>
</dbReference>
<dbReference type="GO" id="GO:0008270">
    <property type="term" value="F:zinc ion binding"/>
    <property type="evidence" value="ECO:0007669"/>
    <property type="project" value="UniProtKB-UniRule"/>
</dbReference>
<dbReference type="GO" id="GO:0006355">
    <property type="term" value="P:regulation of DNA-templated transcription"/>
    <property type="evidence" value="ECO:0007669"/>
    <property type="project" value="InterPro"/>
</dbReference>
<dbReference type="Gene3D" id="3.30.50.10">
    <property type="entry name" value="Erythroid Transcription Factor GATA-1, subunit A"/>
    <property type="match status" value="1"/>
</dbReference>
<dbReference type="HAMAP" id="MF_00649">
    <property type="entry name" value="DNA_gyrase_inhibitor_YacG"/>
    <property type="match status" value="1"/>
</dbReference>
<dbReference type="InterPro" id="IPR005584">
    <property type="entry name" value="DNA_gyrase_inhibitor_YacG"/>
</dbReference>
<dbReference type="InterPro" id="IPR013088">
    <property type="entry name" value="Znf_NHR/GATA"/>
</dbReference>
<dbReference type="NCBIfam" id="NF001638">
    <property type="entry name" value="PRK00418.1"/>
    <property type="match status" value="1"/>
</dbReference>
<dbReference type="PANTHER" id="PTHR36150">
    <property type="entry name" value="DNA GYRASE INHIBITOR YACG"/>
    <property type="match status" value="1"/>
</dbReference>
<dbReference type="PANTHER" id="PTHR36150:SF1">
    <property type="entry name" value="DNA GYRASE INHIBITOR YACG"/>
    <property type="match status" value="1"/>
</dbReference>
<dbReference type="Pfam" id="PF03884">
    <property type="entry name" value="YacG"/>
    <property type="match status" value="1"/>
</dbReference>
<dbReference type="SUPFAM" id="SSF57716">
    <property type="entry name" value="Glucocorticoid receptor-like (DNA-binding domain)"/>
    <property type="match status" value="1"/>
</dbReference>
<protein>
    <recommendedName>
        <fullName evidence="1">DNA gyrase inhibitor YacG</fullName>
    </recommendedName>
</protein>